<protein>
    <recommendedName>
        <fullName evidence="1">Anthranilate phosphoribosyltransferase</fullName>
        <ecNumber evidence="1">2.4.2.18</ecNumber>
    </recommendedName>
</protein>
<accession>B7V608</accession>
<name>TRPD_PSEA8</name>
<sequence>MDIKGALNRIVNQLDLTTEEMQAVMRQIMTGQCTDAQIGAFLMGMRMKSETIDEIVGAVAVMRELADGVQLPTLKHVVDVVGTGGDGANIFNVSSAASFVVAAAGGKVAKHGNRAVSGKSGSADLLEAAGIYLELTSEQVARCIDTVGVGFMFAQVHHKAMKYAAGPRRELGLRTLFNMLGPLTNPAGVRHQVVGVFTQELCKPLAEVLKRLGSEHVLVVHSRDGLDEFSLAAATHIAELKDGEVREYEVRPEDFGIKSQTLMGLEVDSPQASLELIRDALGRRKTEAGQKAAELIVMNAGPALYAADLATSLHEGIQLAHDALHTGLAREKMDELVAFTAVYREENAQ</sequence>
<keyword id="KW-0028">Amino-acid biosynthesis</keyword>
<keyword id="KW-0057">Aromatic amino acid biosynthesis</keyword>
<keyword id="KW-0328">Glycosyltransferase</keyword>
<keyword id="KW-0460">Magnesium</keyword>
<keyword id="KW-0479">Metal-binding</keyword>
<keyword id="KW-0808">Transferase</keyword>
<keyword id="KW-0822">Tryptophan biosynthesis</keyword>
<feature type="chain" id="PRO_1000198835" description="Anthranilate phosphoribosyltransferase">
    <location>
        <begin position="1"/>
        <end position="349"/>
    </location>
</feature>
<feature type="binding site" evidence="1">
    <location>
        <position position="82"/>
    </location>
    <ligand>
        <name>5-phospho-alpha-D-ribose 1-diphosphate</name>
        <dbReference type="ChEBI" id="CHEBI:58017"/>
    </ligand>
</feature>
<feature type="binding site" evidence="1">
    <location>
        <position position="82"/>
    </location>
    <ligand>
        <name>anthranilate</name>
        <dbReference type="ChEBI" id="CHEBI:16567"/>
        <label>1</label>
    </ligand>
</feature>
<feature type="binding site" evidence="1">
    <location>
        <begin position="85"/>
        <end position="86"/>
    </location>
    <ligand>
        <name>5-phospho-alpha-D-ribose 1-diphosphate</name>
        <dbReference type="ChEBI" id="CHEBI:58017"/>
    </ligand>
</feature>
<feature type="binding site" evidence="1">
    <location>
        <begin position="92"/>
        <end position="95"/>
    </location>
    <ligand>
        <name>5-phospho-alpha-D-ribose 1-diphosphate</name>
        <dbReference type="ChEBI" id="CHEBI:58017"/>
    </ligand>
</feature>
<feature type="binding site" evidence="1">
    <location>
        <position position="94"/>
    </location>
    <ligand>
        <name>Mg(2+)</name>
        <dbReference type="ChEBI" id="CHEBI:18420"/>
        <label>1</label>
    </ligand>
</feature>
<feature type="binding site" evidence="1">
    <location>
        <begin position="110"/>
        <end position="118"/>
    </location>
    <ligand>
        <name>5-phospho-alpha-D-ribose 1-diphosphate</name>
        <dbReference type="ChEBI" id="CHEBI:58017"/>
    </ligand>
</feature>
<feature type="binding site" evidence="1">
    <location>
        <position position="113"/>
    </location>
    <ligand>
        <name>anthranilate</name>
        <dbReference type="ChEBI" id="CHEBI:16567"/>
        <label>1</label>
    </ligand>
</feature>
<feature type="binding site" evidence="1">
    <location>
        <position position="122"/>
    </location>
    <ligand>
        <name>5-phospho-alpha-D-ribose 1-diphosphate</name>
        <dbReference type="ChEBI" id="CHEBI:58017"/>
    </ligand>
</feature>
<feature type="binding site" evidence="1">
    <location>
        <position position="168"/>
    </location>
    <ligand>
        <name>anthranilate</name>
        <dbReference type="ChEBI" id="CHEBI:16567"/>
        <label>2</label>
    </ligand>
</feature>
<feature type="binding site" evidence="1">
    <location>
        <position position="227"/>
    </location>
    <ligand>
        <name>Mg(2+)</name>
        <dbReference type="ChEBI" id="CHEBI:18420"/>
        <label>2</label>
    </ligand>
</feature>
<feature type="binding site" evidence="1">
    <location>
        <position position="228"/>
    </location>
    <ligand>
        <name>Mg(2+)</name>
        <dbReference type="ChEBI" id="CHEBI:18420"/>
        <label>1</label>
    </ligand>
</feature>
<feature type="binding site" evidence="1">
    <location>
        <position position="228"/>
    </location>
    <ligand>
        <name>Mg(2+)</name>
        <dbReference type="ChEBI" id="CHEBI:18420"/>
        <label>2</label>
    </ligand>
</feature>
<comment type="function">
    <text evidence="1">Catalyzes the transfer of the phosphoribosyl group of 5-phosphorylribose-1-pyrophosphate (PRPP) to anthranilate to yield N-(5'-phosphoribosyl)-anthranilate (PRA).</text>
</comment>
<comment type="catalytic activity">
    <reaction evidence="1">
        <text>N-(5-phospho-beta-D-ribosyl)anthranilate + diphosphate = 5-phospho-alpha-D-ribose 1-diphosphate + anthranilate</text>
        <dbReference type="Rhea" id="RHEA:11768"/>
        <dbReference type="ChEBI" id="CHEBI:16567"/>
        <dbReference type="ChEBI" id="CHEBI:18277"/>
        <dbReference type="ChEBI" id="CHEBI:33019"/>
        <dbReference type="ChEBI" id="CHEBI:58017"/>
        <dbReference type="EC" id="2.4.2.18"/>
    </reaction>
</comment>
<comment type="cofactor">
    <cofactor evidence="1">
        <name>Mg(2+)</name>
        <dbReference type="ChEBI" id="CHEBI:18420"/>
    </cofactor>
    <text evidence="1">Binds 2 magnesium ions per monomer.</text>
</comment>
<comment type="pathway">
    <text evidence="1">Amino-acid biosynthesis; L-tryptophan biosynthesis; L-tryptophan from chorismate: step 2/5.</text>
</comment>
<comment type="subunit">
    <text evidence="1">Homodimer.</text>
</comment>
<comment type="similarity">
    <text evidence="1">Belongs to the anthranilate phosphoribosyltransferase family.</text>
</comment>
<evidence type="ECO:0000255" key="1">
    <source>
        <dbReference type="HAMAP-Rule" id="MF_00211"/>
    </source>
</evidence>
<organism>
    <name type="scientific">Pseudomonas aeruginosa (strain LESB58)</name>
    <dbReference type="NCBI Taxonomy" id="557722"/>
    <lineage>
        <taxon>Bacteria</taxon>
        <taxon>Pseudomonadati</taxon>
        <taxon>Pseudomonadota</taxon>
        <taxon>Gammaproteobacteria</taxon>
        <taxon>Pseudomonadales</taxon>
        <taxon>Pseudomonadaceae</taxon>
        <taxon>Pseudomonas</taxon>
    </lineage>
</organism>
<gene>
    <name evidence="1" type="primary">trpD</name>
    <name type="ordered locus">PLES_06291</name>
</gene>
<reference key="1">
    <citation type="journal article" date="2009" name="Genome Res.">
        <title>Newly introduced genomic prophage islands are critical determinants of in vivo competitiveness in the Liverpool epidemic strain of Pseudomonas aeruginosa.</title>
        <authorList>
            <person name="Winstanley C."/>
            <person name="Langille M.G.I."/>
            <person name="Fothergill J.L."/>
            <person name="Kukavica-Ibrulj I."/>
            <person name="Paradis-Bleau C."/>
            <person name="Sanschagrin F."/>
            <person name="Thomson N.R."/>
            <person name="Winsor G.L."/>
            <person name="Quail M.A."/>
            <person name="Lennard N."/>
            <person name="Bignell A."/>
            <person name="Clarke L."/>
            <person name="Seeger K."/>
            <person name="Saunders D."/>
            <person name="Harris D."/>
            <person name="Parkhill J."/>
            <person name="Hancock R.E.W."/>
            <person name="Brinkman F.S.L."/>
            <person name="Levesque R.C."/>
        </authorList>
    </citation>
    <scope>NUCLEOTIDE SEQUENCE [LARGE SCALE GENOMIC DNA]</scope>
    <source>
        <strain>LESB58</strain>
    </source>
</reference>
<proteinExistence type="inferred from homology"/>
<dbReference type="EC" id="2.4.2.18" evidence="1"/>
<dbReference type="EMBL" id="FM209186">
    <property type="protein sequence ID" value="CAW25356.1"/>
    <property type="molecule type" value="Genomic_DNA"/>
</dbReference>
<dbReference type="RefSeq" id="WP_003085203.1">
    <property type="nucleotide sequence ID" value="NC_011770.1"/>
</dbReference>
<dbReference type="SMR" id="B7V608"/>
<dbReference type="KEGG" id="pag:PLES_06291"/>
<dbReference type="HOGENOM" id="CLU_034315_2_1_6"/>
<dbReference type="UniPathway" id="UPA00035">
    <property type="reaction ID" value="UER00041"/>
</dbReference>
<dbReference type="GO" id="GO:0005829">
    <property type="term" value="C:cytosol"/>
    <property type="evidence" value="ECO:0007669"/>
    <property type="project" value="TreeGrafter"/>
</dbReference>
<dbReference type="GO" id="GO:0004048">
    <property type="term" value="F:anthranilate phosphoribosyltransferase activity"/>
    <property type="evidence" value="ECO:0007669"/>
    <property type="project" value="UniProtKB-UniRule"/>
</dbReference>
<dbReference type="GO" id="GO:0000287">
    <property type="term" value="F:magnesium ion binding"/>
    <property type="evidence" value="ECO:0007669"/>
    <property type="project" value="UniProtKB-UniRule"/>
</dbReference>
<dbReference type="GO" id="GO:0000162">
    <property type="term" value="P:L-tryptophan biosynthetic process"/>
    <property type="evidence" value="ECO:0007669"/>
    <property type="project" value="UniProtKB-UniRule"/>
</dbReference>
<dbReference type="FunFam" id="1.20.970.10:FF:000006">
    <property type="entry name" value="Anthranilate phosphoribosyltransferase"/>
    <property type="match status" value="1"/>
</dbReference>
<dbReference type="FunFam" id="3.40.1030.10:FF:000002">
    <property type="entry name" value="Anthranilate phosphoribosyltransferase"/>
    <property type="match status" value="1"/>
</dbReference>
<dbReference type="Gene3D" id="3.40.1030.10">
    <property type="entry name" value="Nucleoside phosphorylase/phosphoribosyltransferase catalytic domain"/>
    <property type="match status" value="1"/>
</dbReference>
<dbReference type="Gene3D" id="1.20.970.10">
    <property type="entry name" value="Transferase, Pyrimidine Nucleoside Phosphorylase, Chain C"/>
    <property type="match status" value="1"/>
</dbReference>
<dbReference type="HAMAP" id="MF_00211">
    <property type="entry name" value="TrpD"/>
    <property type="match status" value="1"/>
</dbReference>
<dbReference type="InterPro" id="IPR005940">
    <property type="entry name" value="Anthranilate_Pribosyl_Tfrase"/>
</dbReference>
<dbReference type="InterPro" id="IPR000312">
    <property type="entry name" value="Glycosyl_Trfase_fam3"/>
</dbReference>
<dbReference type="InterPro" id="IPR017459">
    <property type="entry name" value="Glycosyl_Trfase_fam3_N_dom"/>
</dbReference>
<dbReference type="InterPro" id="IPR036320">
    <property type="entry name" value="Glycosyl_Trfase_fam3_N_dom_sf"/>
</dbReference>
<dbReference type="InterPro" id="IPR035902">
    <property type="entry name" value="Nuc_phospho_transferase"/>
</dbReference>
<dbReference type="NCBIfam" id="TIGR01245">
    <property type="entry name" value="trpD"/>
    <property type="match status" value="1"/>
</dbReference>
<dbReference type="PANTHER" id="PTHR43285">
    <property type="entry name" value="ANTHRANILATE PHOSPHORIBOSYLTRANSFERASE"/>
    <property type="match status" value="1"/>
</dbReference>
<dbReference type="PANTHER" id="PTHR43285:SF2">
    <property type="entry name" value="ANTHRANILATE PHOSPHORIBOSYLTRANSFERASE"/>
    <property type="match status" value="1"/>
</dbReference>
<dbReference type="Pfam" id="PF02885">
    <property type="entry name" value="Glycos_trans_3N"/>
    <property type="match status" value="1"/>
</dbReference>
<dbReference type="Pfam" id="PF00591">
    <property type="entry name" value="Glycos_transf_3"/>
    <property type="match status" value="1"/>
</dbReference>
<dbReference type="SUPFAM" id="SSF52418">
    <property type="entry name" value="Nucleoside phosphorylase/phosphoribosyltransferase catalytic domain"/>
    <property type="match status" value="1"/>
</dbReference>
<dbReference type="SUPFAM" id="SSF47648">
    <property type="entry name" value="Nucleoside phosphorylase/phosphoribosyltransferase N-terminal domain"/>
    <property type="match status" value="1"/>
</dbReference>